<dbReference type="EC" id="2.1.1.-" evidence="1"/>
<dbReference type="EMBL" id="CP000096">
    <property type="protein sequence ID" value="ABB23097.1"/>
    <property type="molecule type" value="Genomic_DNA"/>
</dbReference>
<dbReference type="SMR" id="Q3B6D4"/>
<dbReference type="STRING" id="319225.Plut_0209"/>
<dbReference type="KEGG" id="plt:Plut_0209"/>
<dbReference type="eggNOG" id="COG0357">
    <property type="taxonomic scope" value="Bacteria"/>
</dbReference>
<dbReference type="HOGENOM" id="CLU_065341_2_2_10"/>
<dbReference type="OrthoDB" id="9808773at2"/>
<dbReference type="Proteomes" id="UP000002709">
    <property type="component" value="Chromosome"/>
</dbReference>
<dbReference type="GO" id="GO:0005829">
    <property type="term" value="C:cytosol"/>
    <property type="evidence" value="ECO:0007669"/>
    <property type="project" value="TreeGrafter"/>
</dbReference>
<dbReference type="GO" id="GO:0070043">
    <property type="term" value="F:rRNA (guanine-N7-)-methyltransferase activity"/>
    <property type="evidence" value="ECO:0007669"/>
    <property type="project" value="UniProtKB-UniRule"/>
</dbReference>
<dbReference type="CDD" id="cd02440">
    <property type="entry name" value="AdoMet_MTases"/>
    <property type="match status" value="1"/>
</dbReference>
<dbReference type="Gene3D" id="3.40.50.150">
    <property type="entry name" value="Vaccinia Virus protein VP39"/>
    <property type="match status" value="1"/>
</dbReference>
<dbReference type="HAMAP" id="MF_00074">
    <property type="entry name" value="16SrRNA_methyltr_G"/>
    <property type="match status" value="1"/>
</dbReference>
<dbReference type="InterPro" id="IPR003682">
    <property type="entry name" value="rRNA_ssu_MeTfrase_G"/>
</dbReference>
<dbReference type="InterPro" id="IPR029063">
    <property type="entry name" value="SAM-dependent_MTases_sf"/>
</dbReference>
<dbReference type="NCBIfam" id="TIGR00138">
    <property type="entry name" value="rsmG_gidB"/>
    <property type="match status" value="1"/>
</dbReference>
<dbReference type="PANTHER" id="PTHR31760">
    <property type="entry name" value="S-ADENOSYL-L-METHIONINE-DEPENDENT METHYLTRANSFERASES SUPERFAMILY PROTEIN"/>
    <property type="match status" value="1"/>
</dbReference>
<dbReference type="PANTHER" id="PTHR31760:SF0">
    <property type="entry name" value="S-ADENOSYL-L-METHIONINE-DEPENDENT METHYLTRANSFERASES SUPERFAMILY PROTEIN"/>
    <property type="match status" value="1"/>
</dbReference>
<dbReference type="Pfam" id="PF02527">
    <property type="entry name" value="GidB"/>
    <property type="match status" value="1"/>
</dbReference>
<dbReference type="PIRSF" id="PIRSF003078">
    <property type="entry name" value="GidB"/>
    <property type="match status" value="1"/>
</dbReference>
<dbReference type="SUPFAM" id="SSF53335">
    <property type="entry name" value="S-adenosyl-L-methionine-dependent methyltransferases"/>
    <property type="match status" value="1"/>
</dbReference>
<name>RSMG_CHLL3</name>
<proteinExistence type="inferred from homology"/>
<reference key="1">
    <citation type="submission" date="2005-08" db="EMBL/GenBank/DDBJ databases">
        <title>Complete sequence of Pelodictyon luteolum DSM 273.</title>
        <authorList>
            <consortium name="US DOE Joint Genome Institute"/>
            <person name="Copeland A."/>
            <person name="Lucas S."/>
            <person name="Lapidus A."/>
            <person name="Barry K."/>
            <person name="Detter J.C."/>
            <person name="Glavina T."/>
            <person name="Hammon N."/>
            <person name="Israni S."/>
            <person name="Pitluck S."/>
            <person name="Bryant D."/>
            <person name="Schmutz J."/>
            <person name="Larimer F."/>
            <person name="Land M."/>
            <person name="Kyrpides N."/>
            <person name="Ivanova N."/>
            <person name="Richardson P."/>
        </authorList>
    </citation>
    <scope>NUCLEOTIDE SEQUENCE [LARGE SCALE GENOMIC DNA]</scope>
    <source>
        <strain>DSM 273 / BCRC 81028 / 2530</strain>
    </source>
</reference>
<gene>
    <name evidence="1" type="primary">rsmG</name>
    <name type="ordered locus">Plut_0209</name>
</gene>
<comment type="function">
    <text evidence="1">Specifically methylates the N7 position of a guanine in 16S rRNA.</text>
</comment>
<comment type="subcellular location">
    <subcellularLocation>
        <location evidence="1">Cytoplasm</location>
    </subcellularLocation>
</comment>
<comment type="similarity">
    <text evidence="1">Belongs to the methyltransferase superfamily. RNA methyltransferase RsmG family.</text>
</comment>
<organism>
    <name type="scientific">Chlorobium luteolum (strain DSM 273 / BCRC 81028 / 2530)</name>
    <name type="common">Pelodictyon luteolum</name>
    <dbReference type="NCBI Taxonomy" id="319225"/>
    <lineage>
        <taxon>Bacteria</taxon>
        <taxon>Pseudomonadati</taxon>
        <taxon>Chlorobiota</taxon>
        <taxon>Chlorobiia</taxon>
        <taxon>Chlorobiales</taxon>
        <taxon>Chlorobiaceae</taxon>
        <taxon>Chlorobium/Pelodictyon group</taxon>
        <taxon>Pelodictyon</taxon>
    </lineage>
</organism>
<keyword id="KW-0963">Cytoplasm</keyword>
<keyword id="KW-0489">Methyltransferase</keyword>
<keyword id="KW-1185">Reference proteome</keyword>
<keyword id="KW-0698">rRNA processing</keyword>
<keyword id="KW-0949">S-adenosyl-L-methionine</keyword>
<keyword id="KW-0808">Transferase</keyword>
<feature type="chain" id="PRO_0000335393" description="Ribosomal RNA small subunit methyltransferase G">
    <location>
        <begin position="1"/>
        <end position="238"/>
    </location>
</feature>
<feature type="binding site" evidence="1">
    <location>
        <position position="99"/>
    </location>
    <ligand>
        <name>S-adenosyl-L-methionine</name>
        <dbReference type="ChEBI" id="CHEBI:59789"/>
    </ligand>
</feature>
<feature type="binding site" evidence="1">
    <location>
        <position position="104"/>
    </location>
    <ligand>
        <name>S-adenosyl-L-methionine</name>
        <dbReference type="ChEBI" id="CHEBI:59789"/>
    </ligand>
</feature>
<feature type="binding site" evidence="1">
    <location>
        <begin position="122"/>
        <end position="124"/>
    </location>
    <ligand>
        <name>S-adenosyl-L-methionine</name>
        <dbReference type="ChEBI" id="CHEBI:59789"/>
    </ligand>
</feature>
<feature type="binding site" evidence="1">
    <location>
        <begin position="150"/>
        <end position="151"/>
    </location>
    <ligand>
        <name>S-adenosyl-L-methionine</name>
        <dbReference type="ChEBI" id="CHEBI:59789"/>
    </ligand>
</feature>
<feature type="binding site" evidence="1">
    <location>
        <position position="164"/>
    </location>
    <ligand>
        <name>S-adenosyl-L-methionine</name>
        <dbReference type="ChEBI" id="CHEBI:59789"/>
    </ligand>
</feature>
<protein>
    <recommendedName>
        <fullName evidence="1">Ribosomal RNA small subunit methyltransferase G</fullName>
        <ecNumber evidence="1">2.1.1.-</ecNumber>
    </recommendedName>
    <alternativeName>
        <fullName evidence="1">16S rRNA 7-methylguanosine methyltransferase</fullName>
        <shortName evidence="1">16S rRNA m7G methyltransferase</shortName>
    </alternativeName>
</protein>
<evidence type="ECO:0000255" key="1">
    <source>
        <dbReference type="HAMAP-Rule" id="MF_00074"/>
    </source>
</evidence>
<sequence>MKPKASHALRSPINTPIMDHDSEARQMLESLCASQGIALDPAQIDKLVYYGELLGEWNMKINLISRKEDAPVILKHVFHSLLISLHHPFTEGEKVLDLGTGGGLPGIPLAIAFPKTDFLLVDATGKKITACQGMITALGLKNATALHSRVEELKGLAFDTVLSRQVAPLADLARYARPLLKKGGMLACLKGGNLKKEIAEALREGAETDGFPSSVELHPIDDISPFFSEKQIVIAARQ</sequence>
<accession>Q3B6D4</accession>